<organism>
    <name type="scientific">Nitrobacter hamburgensis (strain DSM 10229 / NCIMB 13809 / X14)</name>
    <dbReference type="NCBI Taxonomy" id="323097"/>
    <lineage>
        <taxon>Bacteria</taxon>
        <taxon>Pseudomonadati</taxon>
        <taxon>Pseudomonadota</taxon>
        <taxon>Alphaproteobacteria</taxon>
        <taxon>Hyphomicrobiales</taxon>
        <taxon>Nitrobacteraceae</taxon>
        <taxon>Nitrobacter</taxon>
    </lineage>
</organism>
<gene>
    <name evidence="1" type="primary">atpG</name>
    <name type="ordered locus">Nham_0531</name>
</gene>
<evidence type="ECO:0000255" key="1">
    <source>
        <dbReference type="HAMAP-Rule" id="MF_00815"/>
    </source>
</evidence>
<keyword id="KW-0066">ATP synthesis</keyword>
<keyword id="KW-0997">Cell inner membrane</keyword>
<keyword id="KW-1003">Cell membrane</keyword>
<keyword id="KW-0139">CF(1)</keyword>
<keyword id="KW-0375">Hydrogen ion transport</keyword>
<keyword id="KW-0406">Ion transport</keyword>
<keyword id="KW-0472">Membrane</keyword>
<keyword id="KW-1185">Reference proteome</keyword>
<keyword id="KW-0813">Transport</keyword>
<reference key="1">
    <citation type="submission" date="2006-03" db="EMBL/GenBank/DDBJ databases">
        <title>Complete sequence of chromosome of Nitrobacter hamburgensis X14.</title>
        <authorList>
            <consortium name="US DOE Joint Genome Institute"/>
            <person name="Copeland A."/>
            <person name="Lucas S."/>
            <person name="Lapidus A."/>
            <person name="Barry K."/>
            <person name="Detter J.C."/>
            <person name="Glavina del Rio T."/>
            <person name="Hammon N."/>
            <person name="Israni S."/>
            <person name="Dalin E."/>
            <person name="Tice H."/>
            <person name="Pitluck S."/>
            <person name="Chain P."/>
            <person name="Malfatti S."/>
            <person name="Shin M."/>
            <person name="Vergez L."/>
            <person name="Schmutz J."/>
            <person name="Larimer F."/>
            <person name="Land M."/>
            <person name="Hauser L."/>
            <person name="Kyrpides N."/>
            <person name="Ivanova N."/>
            <person name="Ward B."/>
            <person name="Arp D."/>
            <person name="Klotz M."/>
            <person name="Stein L."/>
            <person name="O'Mullan G."/>
            <person name="Starkenburg S."/>
            <person name="Sayavedra L."/>
            <person name="Poret-Peterson A.T."/>
            <person name="Gentry M.E."/>
            <person name="Bruce D."/>
            <person name="Richardson P."/>
        </authorList>
    </citation>
    <scope>NUCLEOTIDE SEQUENCE [LARGE SCALE GENOMIC DNA]</scope>
    <source>
        <strain>DSM 10229 / NCIMB 13809 / X14</strain>
    </source>
</reference>
<feature type="chain" id="PRO_1000053267" description="ATP synthase gamma chain">
    <location>
        <begin position="1"/>
        <end position="292"/>
    </location>
</feature>
<accession>Q1QQS6</accession>
<sequence length="292" mass="32047">MASLKDMRVRIASTKATQKITKAMQMVAASKLRRAQSAAEAARPYAEKMDQVISNIASAAAGSPGAPVLLGGTGKDQVHLLLVCTGERGLSGAFNSSIVRLARERALALMNQGKDVKFFCVGRKGYEQLRRTFEKQIVENVELRSVRQLGFVNAEAIAKKVIARFNAGEFDVCTLFYSRFKSVIAQVPTAQQIIPLEVEAPAANAGPAPFYEYEPEEDEILTRLLPRNLAVQIFRALLENNASFYGAQMSAMDNATRNAGDMIRKQTLVYNRTRQAMITKELIEIISGAEAI</sequence>
<dbReference type="EMBL" id="CP000319">
    <property type="protein sequence ID" value="ABE61421.1"/>
    <property type="molecule type" value="Genomic_DNA"/>
</dbReference>
<dbReference type="RefSeq" id="WP_011509125.1">
    <property type="nucleotide sequence ID" value="NC_007964.1"/>
</dbReference>
<dbReference type="SMR" id="Q1QQS6"/>
<dbReference type="STRING" id="323097.Nham_0531"/>
<dbReference type="KEGG" id="nha:Nham_0531"/>
<dbReference type="eggNOG" id="COG0224">
    <property type="taxonomic scope" value="Bacteria"/>
</dbReference>
<dbReference type="HOGENOM" id="CLU_050669_0_1_5"/>
<dbReference type="OrthoDB" id="9812769at2"/>
<dbReference type="Proteomes" id="UP000001953">
    <property type="component" value="Chromosome"/>
</dbReference>
<dbReference type="GO" id="GO:0005886">
    <property type="term" value="C:plasma membrane"/>
    <property type="evidence" value="ECO:0007669"/>
    <property type="project" value="UniProtKB-SubCell"/>
</dbReference>
<dbReference type="GO" id="GO:0045259">
    <property type="term" value="C:proton-transporting ATP synthase complex"/>
    <property type="evidence" value="ECO:0007669"/>
    <property type="project" value="UniProtKB-KW"/>
</dbReference>
<dbReference type="GO" id="GO:0005524">
    <property type="term" value="F:ATP binding"/>
    <property type="evidence" value="ECO:0007669"/>
    <property type="project" value="UniProtKB-UniRule"/>
</dbReference>
<dbReference type="GO" id="GO:0046933">
    <property type="term" value="F:proton-transporting ATP synthase activity, rotational mechanism"/>
    <property type="evidence" value="ECO:0007669"/>
    <property type="project" value="UniProtKB-UniRule"/>
</dbReference>
<dbReference type="GO" id="GO:0042777">
    <property type="term" value="P:proton motive force-driven plasma membrane ATP synthesis"/>
    <property type="evidence" value="ECO:0007669"/>
    <property type="project" value="UniProtKB-UniRule"/>
</dbReference>
<dbReference type="CDD" id="cd12151">
    <property type="entry name" value="F1-ATPase_gamma"/>
    <property type="match status" value="1"/>
</dbReference>
<dbReference type="FunFam" id="1.10.287.80:FF:000001">
    <property type="entry name" value="ATP synthase gamma chain"/>
    <property type="match status" value="1"/>
</dbReference>
<dbReference type="Gene3D" id="3.40.1380.10">
    <property type="match status" value="1"/>
</dbReference>
<dbReference type="Gene3D" id="1.10.287.80">
    <property type="entry name" value="ATP synthase, gamma subunit, helix hairpin domain"/>
    <property type="match status" value="1"/>
</dbReference>
<dbReference type="HAMAP" id="MF_00815">
    <property type="entry name" value="ATP_synth_gamma_bact"/>
    <property type="match status" value="1"/>
</dbReference>
<dbReference type="InterPro" id="IPR035968">
    <property type="entry name" value="ATP_synth_F1_ATPase_gsu"/>
</dbReference>
<dbReference type="InterPro" id="IPR000131">
    <property type="entry name" value="ATP_synth_F1_gsu"/>
</dbReference>
<dbReference type="InterPro" id="IPR023632">
    <property type="entry name" value="ATP_synth_F1_gsu_CS"/>
</dbReference>
<dbReference type="NCBIfam" id="TIGR01146">
    <property type="entry name" value="ATPsyn_F1gamma"/>
    <property type="match status" value="1"/>
</dbReference>
<dbReference type="NCBIfam" id="NF004146">
    <property type="entry name" value="PRK05621.1-4"/>
    <property type="match status" value="1"/>
</dbReference>
<dbReference type="PANTHER" id="PTHR11693">
    <property type="entry name" value="ATP SYNTHASE GAMMA CHAIN"/>
    <property type="match status" value="1"/>
</dbReference>
<dbReference type="PANTHER" id="PTHR11693:SF22">
    <property type="entry name" value="ATP SYNTHASE SUBUNIT GAMMA, MITOCHONDRIAL"/>
    <property type="match status" value="1"/>
</dbReference>
<dbReference type="Pfam" id="PF00231">
    <property type="entry name" value="ATP-synt"/>
    <property type="match status" value="1"/>
</dbReference>
<dbReference type="PIRSF" id="PIRSF039089">
    <property type="entry name" value="ATP_synthase_gamma"/>
    <property type="match status" value="1"/>
</dbReference>
<dbReference type="PRINTS" id="PR00126">
    <property type="entry name" value="ATPASEGAMMA"/>
</dbReference>
<dbReference type="SUPFAM" id="SSF52943">
    <property type="entry name" value="ATP synthase (F1-ATPase), gamma subunit"/>
    <property type="match status" value="1"/>
</dbReference>
<dbReference type="PROSITE" id="PS00153">
    <property type="entry name" value="ATPASE_GAMMA"/>
    <property type="match status" value="1"/>
</dbReference>
<name>ATPG_NITHX</name>
<proteinExistence type="inferred from homology"/>
<protein>
    <recommendedName>
        <fullName evidence="1">ATP synthase gamma chain</fullName>
    </recommendedName>
    <alternativeName>
        <fullName evidence="1">ATP synthase F1 sector gamma subunit</fullName>
    </alternativeName>
    <alternativeName>
        <fullName evidence="1">F-ATPase gamma subunit</fullName>
    </alternativeName>
</protein>
<comment type="function">
    <text evidence="1">Produces ATP from ADP in the presence of a proton gradient across the membrane. The gamma chain is believed to be important in regulating ATPase activity and the flow of protons through the CF(0) complex.</text>
</comment>
<comment type="subunit">
    <text evidence="1">F-type ATPases have 2 components, CF(1) - the catalytic core - and CF(0) - the membrane proton channel. CF(1) has five subunits: alpha(3), beta(3), gamma(1), delta(1), epsilon(1). CF(0) has three main subunits: a, b and c.</text>
</comment>
<comment type="subcellular location">
    <subcellularLocation>
        <location evidence="1">Cell inner membrane</location>
        <topology evidence="1">Peripheral membrane protein</topology>
    </subcellularLocation>
</comment>
<comment type="similarity">
    <text evidence="1">Belongs to the ATPase gamma chain family.</text>
</comment>